<keyword id="KW-0002">3D-structure</keyword>
<keyword id="KW-0903">Direct protein sequencing</keyword>
<keyword id="KW-1185">Reference proteome</keyword>
<keyword id="KW-0687">Ribonucleoprotein</keyword>
<keyword id="KW-0689">Ribosomal protein</keyword>
<keyword id="KW-0694">RNA-binding</keyword>
<keyword id="KW-0699">rRNA-binding</keyword>
<reference key="1">
    <citation type="journal article" date="1994" name="DNA Res.">
        <title>Systematic sequencing of the 180 kilobase region of the Bacillus subtilis chromosome containing the replication origin.</title>
        <authorList>
            <person name="Ogasawara N."/>
            <person name="Nakai S."/>
            <person name="Yoshikawa H."/>
        </authorList>
    </citation>
    <scope>NUCLEOTIDE SEQUENCE [GENOMIC DNA]</scope>
    <source>
        <strain>168</strain>
    </source>
</reference>
<reference key="2">
    <citation type="journal article" date="1997" name="Nature">
        <title>The complete genome sequence of the Gram-positive bacterium Bacillus subtilis.</title>
        <authorList>
            <person name="Kunst F."/>
            <person name="Ogasawara N."/>
            <person name="Moszer I."/>
            <person name="Albertini A.M."/>
            <person name="Alloni G."/>
            <person name="Azevedo V."/>
            <person name="Bertero M.G."/>
            <person name="Bessieres P."/>
            <person name="Bolotin A."/>
            <person name="Borchert S."/>
            <person name="Borriss R."/>
            <person name="Boursier L."/>
            <person name="Brans A."/>
            <person name="Braun M."/>
            <person name="Brignell S.C."/>
            <person name="Bron S."/>
            <person name="Brouillet S."/>
            <person name="Bruschi C.V."/>
            <person name="Caldwell B."/>
            <person name="Capuano V."/>
            <person name="Carter N.M."/>
            <person name="Choi S.-K."/>
            <person name="Codani J.-J."/>
            <person name="Connerton I.F."/>
            <person name="Cummings N.J."/>
            <person name="Daniel R.A."/>
            <person name="Denizot F."/>
            <person name="Devine K.M."/>
            <person name="Duesterhoeft A."/>
            <person name="Ehrlich S.D."/>
            <person name="Emmerson P.T."/>
            <person name="Entian K.-D."/>
            <person name="Errington J."/>
            <person name="Fabret C."/>
            <person name="Ferrari E."/>
            <person name="Foulger D."/>
            <person name="Fritz C."/>
            <person name="Fujita M."/>
            <person name="Fujita Y."/>
            <person name="Fuma S."/>
            <person name="Galizzi A."/>
            <person name="Galleron N."/>
            <person name="Ghim S.-Y."/>
            <person name="Glaser P."/>
            <person name="Goffeau A."/>
            <person name="Golightly E.J."/>
            <person name="Grandi G."/>
            <person name="Guiseppi G."/>
            <person name="Guy B.J."/>
            <person name="Haga K."/>
            <person name="Haiech J."/>
            <person name="Harwood C.R."/>
            <person name="Henaut A."/>
            <person name="Hilbert H."/>
            <person name="Holsappel S."/>
            <person name="Hosono S."/>
            <person name="Hullo M.-F."/>
            <person name="Itaya M."/>
            <person name="Jones L.-M."/>
            <person name="Joris B."/>
            <person name="Karamata D."/>
            <person name="Kasahara Y."/>
            <person name="Klaerr-Blanchard M."/>
            <person name="Klein C."/>
            <person name="Kobayashi Y."/>
            <person name="Koetter P."/>
            <person name="Koningstein G."/>
            <person name="Krogh S."/>
            <person name="Kumano M."/>
            <person name="Kurita K."/>
            <person name="Lapidus A."/>
            <person name="Lardinois S."/>
            <person name="Lauber J."/>
            <person name="Lazarevic V."/>
            <person name="Lee S.-M."/>
            <person name="Levine A."/>
            <person name="Liu H."/>
            <person name="Masuda S."/>
            <person name="Mauel C."/>
            <person name="Medigue C."/>
            <person name="Medina N."/>
            <person name="Mellado R.P."/>
            <person name="Mizuno M."/>
            <person name="Moestl D."/>
            <person name="Nakai S."/>
            <person name="Noback M."/>
            <person name="Noone D."/>
            <person name="O'Reilly M."/>
            <person name="Ogawa K."/>
            <person name="Ogiwara A."/>
            <person name="Oudega B."/>
            <person name="Park S.-H."/>
            <person name="Parro V."/>
            <person name="Pohl T.M."/>
            <person name="Portetelle D."/>
            <person name="Porwollik S."/>
            <person name="Prescott A.M."/>
            <person name="Presecan E."/>
            <person name="Pujic P."/>
            <person name="Purnelle B."/>
            <person name="Rapoport G."/>
            <person name="Rey M."/>
            <person name="Reynolds S."/>
            <person name="Rieger M."/>
            <person name="Rivolta C."/>
            <person name="Rocha E."/>
            <person name="Roche B."/>
            <person name="Rose M."/>
            <person name="Sadaie Y."/>
            <person name="Sato T."/>
            <person name="Scanlan E."/>
            <person name="Schleich S."/>
            <person name="Schroeter R."/>
            <person name="Scoffone F."/>
            <person name="Sekiguchi J."/>
            <person name="Sekowska A."/>
            <person name="Seror S.J."/>
            <person name="Serror P."/>
            <person name="Shin B.-S."/>
            <person name="Soldo B."/>
            <person name="Sorokin A."/>
            <person name="Tacconi E."/>
            <person name="Takagi T."/>
            <person name="Takahashi H."/>
            <person name="Takemaru K."/>
            <person name="Takeuchi M."/>
            <person name="Tamakoshi A."/>
            <person name="Tanaka T."/>
            <person name="Terpstra P."/>
            <person name="Tognoni A."/>
            <person name="Tosato V."/>
            <person name="Uchiyama S."/>
            <person name="Vandenbol M."/>
            <person name="Vannier F."/>
            <person name="Vassarotti A."/>
            <person name="Viari A."/>
            <person name="Wambutt R."/>
            <person name="Wedler E."/>
            <person name="Wedler H."/>
            <person name="Weitzenegger T."/>
            <person name="Winters P."/>
            <person name="Wipat A."/>
            <person name="Yamamoto H."/>
            <person name="Yamane K."/>
            <person name="Yasumoto K."/>
            <person name="Yata K."/>
            <person name="Yoshida K."/>
            <person name="Yoshikawa H.-F."/>
            <person name="Zumstein E."/>
            <person name="Yoshikawa H."/>
            <person name="Danchin A."/>
        </authorList>
    </citation>
    <scope>NUCLEOTIDE SEQUENCE [LARGE SCALE GENOMIC DNA]</scope>
    <source>
        <strain>168</strain>
    </source>
</reference>
<reference key="3">
    <citation type="journal article" date="1982" name="Mol. Gen. Genet.">
        <title>Purification and characterization of 30S ribosomal proteins from Bacillus subtilis: correlation to Escherichia coli 30S proteins.</title>
        <authorList>
            <person name="Higo K."/>
            <person name="Otaka E."/>
            <person name="Osawa S."/>
        </authorList>
    </citation>
    <scope>PROTEIN SEQUENCE OF 2-24</scope>
</reference>
<reference key="4">
    <citation type="journal article" date="2004" name="J. Bacteriol.">
        <title>Differential expression of two paralogous genes of Bacillus subtilis encoding single-stranded DNA binding protein.</title>
        <authorList>
            <person name="Lindner C."/>
            <person name="Nijland R."/>
            <person name="van Hartskamp M."/>
            <person name="Bron S."/>
            <person name="Hamoen L.W."/>
            <person name="Kuipers O.P."/>
        </authorList>
    </citation>
    <scope>INDUCTION</scope>
    <source>
        <strain>168</strain>
    </source>
</reference>
<reference evidence="6 7" key="5">
    <citation type="journal article" date="2018" name="Proc. Natl. Acad. Sci. U.S.A.">
        <title>Structural basis for antibiotic resistance mediated by the Bacillus subtilis ABCF ATPase VmlR.</title>
        <authorList>
            <person name="Crowe-McAuliffe C."/>
            <person name="Graf M."/>
            <person name="Huter P."/>
            <person name="Takada H."/>
            <person name="Abdelshahid M."/>
            <person name="Novacek J."/>
            <person name="Murina V."/>
            <person name="Atkinson G.C."/>
            <person name="Hauryliuk V."/>
            <person name="Wilson D.N."/>
        </authorList>
    </citation>
    <scope>STRUCTURE BY ELECTRON MICROSCOPY (3.10 ANGSTROMS) OF 1-79 WITH AND WITHOUT VIRGINIAMYCIN M</scope>
    <scope>SUBUNIT</scope>
</reference>
<sequence length="79" mass="8970">MAGGRRGGRAKRRKVCYFTSNGITHIDYKDVDLLKKFVSERGKILPRRVTGTNAKYQRKLTAAIKRARQMALLPYVSGE</sequence>
<protein>
    <recommendedName>
        <fullName evidence="5">Small ribosomal subunit protein bS18</fullName>
    </recommendedName>
    <alternativeName>
        <fullName>30S ribosomal protein S18</fullName>
    </alternativeName>
    <alternativeName>
        <fullName>BS21</fullName>
    </alternativeName>
</protein>
<gene>
    <name type="primary">rpsR</name>
    <name type="ordered locus">BSU40890</name>
</gene>
<proteinExistence type="evidence at protein level"/>
<dbReference type="EMBL" id="D26185">
    <property type="protein sequence ID" value="BAA05219.1"/>
    <property type="status" value="ALT_INIT"/>
    <property type="molecule type" value="Genomic_DNA"/>
</dbReference>
<dbReference type="EMBL" id="AL009126">
    <property type="protein sequence ID" value="CAB16126.2"/>
    <property type="molecule type" value="Genomic_DNA"/>
</dbReference>
<dbReference type="PIR" id="S66013">
    <property type="entry name" value="S66013"/>
</dbReference>
<dbReference type="RefSeq" id="NP_391969.2">
    <property type="nucleotide sequence ID" value="NC_000964.3"/>
</dbReference>
<dbReference type="RefSeq" id="WP_003219224.1">
    <property type="nucleotide sequence ID" value="NZ_OZ025638.1"/>
</dbReference>
<dbReference type="PDB" id="3J9W">
    <property type="method" value="EM"/>
    <property type="resolution" value="3.90 A"/>
    <property type="chains" value="AR=1-79"/>
</dbReference>
<dbReference type="PDB" id="5NJT">
    <property type="method" value="EM"/>
    <property type="resolution" value="3.80 A"/>
    <property type="chains" value="R=9-79"/>
</dbReference>
<dbReference type="PDB" id="6HA1">
    <property type="method" value="EM"/>
    <property type="resolution" value="3.10 A"/>
    <property type="chains" value="r=1-79"/>
</dbReference>
<dbReference type="PDB" id="6HA8">
    <property type="method" value="EM"/>
    <property type="resolution" value="3.50 A"/>
    <property type="chains" value="r=1-79"/>
</dbReference>
<dbReference type="PDB" id="6HTQ">
    <property type="method" value="EM"/>
    <property type="resolution" value="4.50 A"/>
    <property type="chains" value="r=14-77"/>
</dbReference>
<dbReference type="PDB" id="7O5B">
    <property type="method" value="EM"/>
    <property type="resolution" value="3.33 A"/>
    <property type="chains" value="R=1-79"/>
</dbReference>
<dbReference type="PDB" id="7QGU">
    <property type="method" value="EM"/>
    <property type="resolution" value="4.75 A"/>
    <property type="chains" value="w=1-79"/>
</dbReference>
<dbReference type="PDB" id="7QH4">
    <property type="method" value="EM"/>
    <property type="resolution" value="5.45 A"/>
    <property type="chains" value="v=1-79"/>
</dbReference>
<dbReference type="PDB" id="7QV1">
    <property type="method" value="EM"/>
    <property type="resolution" value="3.50 A"/>
    <property type="chains" value="r=1-79"/>
</dbReference>
<dbReference type="PDB" id="7QV2">
    <property type="method" value="EM"/>
    <property type="resolution" value="3.50 A"/>
    <property type="chains" value="r=1-79"/>
</dbReference>
<dbReference type="PDB" id="7QV3">
    <property type="method" value="EM"/>
    <property type="resolution" value="5.14 A"/>
    <property type="chains" value="r=1-79"/>
</dbReference>
<dbReference type="PDB" id="8BUU">
    <property type="method" value="EM"/>
    <property type="resolution" value="2.90 A"/>
    <property type="chains" value="r=1-79"/>
</dbReference>
<dbReference type="PDB" id="8CDU">
    <property type="method" value="EM"/>
    <property type="resolution" value="3.10 A"/>
    <property type="chains" value="U=1-79"/>
</dbReference>
<dbReference type="PDB" id="8CDV">
    <property type="method" value="EM"/>
    <property type="resolution" value="4.73 A"/>
    <property type="chains" value="U=1-79"/>
</dbReference>
<dbReference type="PDB" id="8CEC">
    <property type="method" value="EM"/>
    <property type="resolution" value="3.57 A"/>
    <property type="chains" value="U=1-79"/>
</dbReference>
<dbReference type="PDB" id="8CED">
    <property type="method" value="EM"/>
    <property type="resolution" value="4.15 A"/>
    <property type="chains" value="U=1-79"/>
</dbReference>
<dbReference type="PDB" id="8CEE">
    <property type="method" value="EM"/>
    <property type="resolution" value="3.70 A"/>
    <property type="chains" value="U=1-79"/>
</dbReference>
<dbReference type="PDB" id="8QCQ">
    <property type="method" value="EM"/>
    <property type="resolution" value="2.30 A"/>
    <property type="chains" value="r=1-79"/>
</dbReference>
<dbReference type="PDB" id="8QPP">
    <property type="method" value="EM"/>
    <property type="resolution" value="3.40 A"/>
    <property type="chains" value="R=1-79"/>
</dbReference>
<dbReference type="PDB" id="8R55">
    <property type="method" value="EM"/>
    <property type="resolution" value="3.57 A"/>
    <property type="chains" value="R=1-79"/>
</dbReference>
<dbReference type="PDBsum" id="3J9W"/>
<dbReference type="PDBsum" id="5NJT"/>
<dbReference type="PDBsum" id="6HA1"/>
<dbReference type="PDBsum" id="6HA8"/>
<dbReference type="PDBsum" id="6HTQ"/>
<dbReference type="PDBsum" id="7O5B"/>
<dbReference type="PDBsum" id="7QGU"/>
<dbReference type="PDBsum" id="7QH4"/>
<dbReference type="PDBsum" id="7QV1"/>
<dbReference type="PDBsum" id="7QV2"/>
<dbReference type="PDBsum" id="7QV3"/>
<dbReference type="PDBsum" id="8BUU"/>
<dbReference type="PDBsum" id="8CDU"/>
<dbReference type="PDBsum" id="8CDV"/>
<dbReference type="PDBsum" id="8CEC"/>
<dbReference type="PDBsum" id="8CED"/>
<dbReference type="PDBsum" id="8CEE"/>
<dbReference type="PDBsum" id="8QCQ"/>
<dbReference type="PDBsum" id="8QPP"/>
<dbReference type="PDBsum" id="8R55"/>
<dbReference type="EMDB" id="EMD-0176"/>
<dbReference type="EMDB" id="EMD-0177"/>
<dbReference type="EMDB" id="EMD-0270"/>
<dbReference type="EMDB" id="EMD-12734"/>
<dbReference type="EMDB" id="EMD-14157"/>
<dbReference type="EMDB" id="EMD-14158"/>
<dbReference type="EMDB" id="EMD-14159"/>
<dbReference type="EMDB" id="EMD-16246"/>
<dbReference type="EMDB" id="EMD-16595"/>
<dbReference type="EMDB" id="EMD-16596"/>
<dbReference type="EMDB" id="EMD-16605"/>
<dbReference type="EMDB" id="EMD-16606"/>
<dbReference type="EMDB" id="EMD-16607"/>
<dbReference type="EMDB" id="EMD-18332"/>
<dbReference type="EMDB" id="EMD-3656"/>
<dbReference type="SMR" id="P21475"/>
<dbReference type="FunCoup" id="P21475">
    <property type="interactions" value="546"/>
</dbReference>
<dbReference type="STRING" id="224308.BSU40890"/>
<dbReference type="jPOST" id="P21475"/>
<dbReference type="PaxDb" id="224308-BSU40890"/>
<dbReference type="EnsemblBacteria" id="CAB16126">
    <property type="protein sequence ID" value="CAB16126"/>
    <property type="gene ID" value="BSU_40890"/>
</dbReference>
<dbReference type="GeneID" id="86871269"/>
<dbReference type="GeneID" id="937906"/>
<dbReference type="KEGG" id="bsu:BSU40890"/>
<dbReference type="PATRIC" id="fig|224308.179.peg.4430"/>
<dbReference type="eggNOG" id="COG0238">
    <property type="taxonomic scope" value="Bacteria"/>
</dbReference>
<dbReference type="InParanoid" id="P21475"/>
<dbReference type="OrthoDB" id="9812008at2"/>
<dbReference type="PhylomeDB" id="P21475"/>
<dbReference type="BioCyc" id="BSUB:BSU40890-MONOMER"/>
<dbReference type="PRO" id="PR:P21475"/>
<dbReference type="Proteomes" id="UP000001570">
    <property type="component" value="Chromosome"/>
</dbReference>
<dbReference type="GO" id="GO:0022627">
    <property type="term" value="C:cytosolic small ribosomal subunit"/>
    <property type="evidence" value="ECO:0000318"/>
    <property type="project" value="GO_Central"/>
</dbReference>
<dbReference type="GO" id="GO:0070181">
    <property type="term" value="F:small ribosomal subunit rRNA binding"/>
    <property type="evidence" value="ECO:0000318"/>
    <property type="project" value="GO_Central"/>
</dbReference>
<dbReference type="GO" id="GO:0003735">
    <property type="term" value="F:structural constituent of ribosome"/>
    <property type="evidence" value="ECO:0000318"/>
    <property type="project" value="GO_Central"/>
</dbReference>
<dbReference type="GO" id="GO:0006412">
    <property type="term" value="P:translation"/>
    <property type="evidence" value="ECO:0000318"/>
    <property type="project" value="GO_Central"/>
</dbReference>
<dbReference type="FunFam" id="4.10.640.10:FF:000003">
    <property type="entry name" value="30S ribosomal protein S18"/>
    <property type="match status" value="1"/>
</dbReference>
<dbReference type="Gene3D" id="4.10.640.10">
    <property type="entry name" value="Ribosomal protein S18"/>
    <property type="match status" value="1"/>
</dbReference>
<dbReference type="HAMAP" id="MF_00270">
    <property type="entry name" value="Ribosomal_bS18"/>
    <property type="match status" value="1"/>
</dbReference>
<dbReference type="InterPro" id="IPR001648">
    <property type="entry name" value="Ribosomal_bS18"/>
</dbReference>
<dbReference type="InterPro" id="IPR018275">
    <property type="entry name" value="Ribosomal_bS18_CS"/>
</dbReference>
<dbReference type="InterPro" id="IPR036870">
    <property type="entry name" value="Ribosomal_bS18_sf"/>
</dbReference>
<dbReference type="NCBIfam" id="TIGR00165">
    <property type="entry name" value="S18"/>
    <property type="match status" value="1"/>
</dbReference>
<dbReference type="PANTHER" id="PTHR13479">
    <property type="entry name" value="30S RIBOSOMAL PROTEIN S18"/>
    <property type="match status" value="1"/>
</dbReference>
<dbReference type="PANTHER" id="PTHR13479:SF40">
    <property type="entry name" value="SMALL RIBOSOMAL SUBUNIT PROTEIN BS18M"/>
    <property type="match status" value="1"/>
</dbReference>
<dbReference type="Pfam" id="PF01084">
    <property type="entry name" value="Ribosomal_S18"/>
    <property type="match status" value="1"/>
</dbReference>
<dbReference type="PRINTS" id="PR00974">
    <property type="entry name" value="RIBOSOMALS18"/>
</dbReference>
<dbReference type="SUPFAM" id="SSF46911">
    <property type="entry name" value="Ribosomal protein S18"/>
    <property type="match status" value="1"/>
</dbReference>
<dbReference type="PROSITE" id="PS00057">
    <property type="entry name" value="RIBOSOMAL_S18"/>
    <property type="match status" value="1"/>
</dbReference>
<name>RS18_BACSU</name>
<comment type="function">
    <text evidence="1">Binds as a heterodimer with protein bS6 to the central domain of the 16S rRNA, where it helps stabilize the platform of the 30S subunit.</text>
</comment>
<comment type="subunit">
    <text evidence="1 3">Part of the 30S ribosomal subunit (PubMed:30126986). Forms a tight heterodimer with protein bS6 (By similarity).</text>
</comment>
<comment type="induction">
    <text evidence="2">Strongly expressed during exponential growth, decreases 2-4-fold in stationary phase, part of the rpsF-ssbA-rpsR operon (PubMed:14762004). The operon is induced by DNA damage by mitomycin C (PubMed:14762004).</text>
</comment>
<comment type="similarity">
    <text evidence="5">Belongs to the bacterial ribosomal protein bS18 family.</text>
</comment>
<comment type="sequence caution" evidence="5">
    <conflict type="erroneous initiation">
        <sequence resource="EMBL-CDS" id="BAA05219"/>
    </conflict>
    <text>Extended N-terminus.</text>
</comment>
<organism>
    <name type="scientific">Bacillus subtilis (strain 168)</name>
    <dbReference type="NCBI Taxonomy" id="224308"/>
    <lineage>
        <taxon>Bacteria</taxon>
        <taxon>Bacillati</taxon>
        <taxon>Bacillota</taxon>
        <taxon>Bacilli</taxon>
        <taxon>Bacillales</taxon>
        <taxon>Bacillaceae</taxon>
        <taxon>Bacillus</taxon>
    </lineage>
</organism>
<accession>P21475</accession>
<feature type="initiator methionine" description="Removed" evidence="4">
    <location>
        <position position="1"/>
    </location>
</feature>
<feature type="chain" id="PRO_0000111117" description="Small ribosomal subunit protein bS18">
    <location>
        <begin position="2"/>
        <end position="79"/>
    </location>
</feature>
<feature type="helix" evidence="8">
    <location>
        <begin position="17"/>
        <end position="20"/>
    </location>
</feature>
<feature type="helix" evidence="8">
    <location>
        <begin position="31"/>
        <end position="35"/>
    </location>
</feature>
<feature type="helix" evidence="8">
    <location>
        <begin position="47"/>
        <end position="50"/>
    </location>
</feature>
<feature type="helix" evidence="8">
    <location>
        <begin position="54"/>
        <end position="69"/>
    </location>
</feature>
<evidence type="ECO:0000250" key="1"/>
<evidence type="ECO:0000269" key="2">
    <source>
    </source>
</evidence>
<evidence type="ECO:0000269" key="3">
    <source>
    </source>
</evidence>
<evidence type="ECO:0000269" key="4">
    <source>
    </source>
</evidence>
<evidence type="ECO:0000305" key="5"/>
<evidence type="ECO:0007744" key="6">
    <source>
        <dbReference type="PDB" id="6HA1"/>
    </source>
</evidence>
<evidence type="ECO:0007744" key="7">
    <source>
        <dbReference type="PDB" id="6HA8"/>
    </source>
</evidence>
<evidence type="ECO:0007829" key="8">
    <source>
        <dbReference type="PDB" id="8CDU"/>
    </source>
</evidence>